<gene>
    <name evidence="1" type="primary">pyrD</name>
    <name type="ordered locus">KRH_12900</name>
</gene>
<sequence length="363" mass="38661">MRLYPAFFKAAFSWMDPELAHTLGFAGIKLAHRTGLGRVLSRVTAPDEGAEVNVMGLTFPSPFGLAAGFDKGATGTHALTQLGFGHVEIGTVTGQAQPGNPRPRLFRLVRDRAVINRMGFNNDGAEAVAPRVAAALQTLAQESIRTGRRRPVVGVNIGKTKAVGLEDAAADYVRSTRVLAPYADYLVVNVSSPNTPGLRQLQELDALRPLLLAVRAEADRVTGRRVPLLVKIAPDLADEDVTAVADLALELGLDGIVATNTTIAREGLGLRTNHDDVAACGAGGLSGAPLRRRSLEVLRLLKEHAGEQLVLVSVGGVTTARDVMERLDAGASLVQGYTAFLYEGPFWAGRINRGLRRAAREGR</sequence>
<dbReference type="EC" id="1.3.5.2" evidence="1"/>
<dbReference type="EMBL" id="AP009152">
    <property type="protein sequence ID" value="BAG29637.1"/>
    <property type="molecule type" value="Genomic_DNA"/>
</dbReference>
<dbReference type="RefSeq" id="WP_012398358.1">
    <property type="nucleotide sequence ID" value="NC_010617.1"/>
</dbReference>
<dbReference type="SMR" id="B2GHT4"/>
<dbReference type="STRING" id="378753.KRH_12900"/>
<dbReference type="KEGG" id="krh:KRH_12900"/>
<dbReference type="eggNOG" id="COG0167">
    <property type="taxonomic scope" value="Bacteria"/>
</dbReference>
<dbReference type="HOGENOM" id="CLU_013640_2_0_11"/>
<dbReference type="OrthoDB" id="9802377at2"/>
<dbReference type="UniPathway" id="UPA00070">
    <property type="reaction ID" value="UER00946"/>
</dbReference>
<dbReference type="Proteomes" id="UP000008838">
    <property type="component" value="Chromosome"/>
</dbReference>
<dbReference type="GO" id="GO:0005737">
    <property type="term" value="C:cytoplasm"/>
    <property type="evidence" value="ECO:0007669"/>
    <property type="project" value="InterPro"/>
</dbReference>
<dbReference type="GO" id="GO:0005886">
    <property type="term" value="C:plasma membrane"/>
    <property type="evidence" value="ECO:0007669"/>
    <property type="project" value="UniProtKB-SubCell"/>
</dbReference>
<dbReference type="GO" id="GO:0106430">
    <property type="term" value="F:dihydroorotate dehydrogenase (quinone) activity"/>
    <property type="evidence" value="ECO:0007669"/>
    <property type="project" value="UniProtKB-EC"/>
</dbReference>
<dbReference type="GO" id="GO:0006207">
    <property type="term" value="P:'de novo' pyrimidine nucleobase biosynthetic process"/>
    <property type="evidence" value="ECO:0007669"/>
    <property type="project" value="InterPro"/>
</dbReference>
<dbReference type="GO" id="GO:0044205">
    <property type="term" value="P:'de novo' UMP biosynthetic process"/>
    <property type="evidence" value="ECO:0007669"/>
    <property type="project" value="UniProtKB-UniRule"/>
</dbReference>
<dbReference type="CDD" id="cd04738">
    <property type="entry name" value="DHOD_2_like"/>
    <property type="match status" value="1"/>
</dbReference>
<dbReference type="FunFam" id="3.20.20.70:FF:000123">
    <property type="entry name" value="Dihydroorotate dehydrogenase (quinone)"/>
    <property type="match status" value="1"/>
</dbReference>
<dbReference type="Gene3D" id="3.20.20.70">
    <property type="entry name" value="Aldolase class I"/>
    <property type="match status" value="1"/>
</dbReference>
<dbReference type="HAMAP" id="MF_00225">
    <property type="entry name" value="DHO_dh_type2"/>
    <property type="match status" value="1"/>
</dbReference>
<dbReference type="InterPro" id="IPR013785">
    <property type="entry name" value="Aldolase_TIM"/>
</dbReference>
<dbReference type="InterPro" id="IPR050074">
    <property type="entry name" value="DHO_dehydrogenase"/>
</dbReference>
<dbReference type="InterPro" id="IPR005719">
    <property type="entry name" value="Dihydroorotate_DH_2"/>
</dbReference>
<dbReference type="InterPro" id="IPR005720">
    <property type="entry name" value="Dihydroorotate_DH_cat"/>
</dbReference>
<dbReference type="InterPro" id="IPR001295">
    <property type="entry name" value="Dihydroorotate_DH_CS"/>
</dbReference>
<dbReference type="NCBIfam" id="NF003648">
    <property type="entry name" value="PRK05286.2-1"/>
    <property type="match status" value="1"/>
</dbReference>
<dbReference type="NCBIfam" id="NF003652">
    <property type="entry name" value="PRK05286.2-5"/>
    <property type="match status" value="1"/>
</dbReference>
<dbReference type="NCBIfam" id="TIGR01036">
    <property type="entry name" value="pyrD_sub2"/>
    <property type="match status" value="1"/>
</dbReference>
<dbReference type="PANTHER" id="PTHR48109:SF4">
    <property type="entry name" value="DIHYDROOROTATE DEHYDROGENASE (QUINONE), MITOCHONDRIAL"/>
    <property type="match status" value="1"/>
</dbReference>
<dbReference type="PANTHER" id="PTHR48109">
    <property type="entry name" value="DIHYDROOROTATE DEHYDROGENASE (QUINONE), MITOCHONDRIAL-RELATED"/>
    <property type="match status" value="1"/>
</dbReference>
<dbReference type="Pfam" id="PF01180">
    <property type="entry name" value="DHO_dh"/>
    <property type="match status" value="1"/>
</dbReference>
<dbReference type="SUPFAM" id="SSF51395">
    <property type="entry name" value="FMN-linked oxidoreductases"/>
    <property type="match status" value="1"/>
</dbReference>
<dbReference type="PROSITE" id="PS00911">
    <property type="entry name" value="DHODEHASE_1"/>
    <property type="match status" value="1"/>
</dbReference>
<dbReference type="PROSITE" id="PS00912">
    <property type="entry name" value="DHODEHASE_2"/>
    <property type="match status" value="1"/>
</dbReference>
<accession>B2GHT4</accession>
<organism>
    <name type="scientific">Kocuria rhizophila (strain ATCC 9341 / DSM 348 / NBRC 103217 / DC2201)</name>
    <dbReference type="NCBI Taxonomy" id="378753"/>
    <lineage>
        <taxon>Bacteria</taxon>
        <taxon>Bacillati</taxon>
        <taxon>Actinomycetota</taxon>
        <taxon>Actinomycetes</taxon>
        <taxon>Micrococcales</taxon>
        <taxon>Micrococcaceae</taxon>
        <taxon>Kocuria</taxon>
    </lineage>
</organism>
<feature type="chain" id="PRO_1000100270" description="Dihydroorotate dehydrogenase (quinone)">
    <location>
        <begin position="1"/>
        <end position="363"/>
    </location>
</feature>
<feature type="active site" description="Nucleophile" evidence="1">
    <location>
        <position position="192"/>
    </location>
</feature>
<feature type="binding site" evidence="1">
    <location>
        <begin position="67"/>
        <end position="71"/>
    </location>
    <ligand>
        <name>FMN</name>
        <dbReference type="ChEBI" id="CHEBI:58210"/>
    </ligand>
</feature>
<feature type="binding site" evidence="1">
    <location>
        <position position="71"/>
    </location>
    <ligand>
        <name>substrate</name>
    </ligand>
</feature>
<feature type="binding site" evidence="1">
    <location>
        <position position="91"/>
    </location>
    <ligand>
        <name>FMN</name>
        <dbReference type="ChEBI" id="CHEBI:58210"/>
    </ligand>
</feature>
<feature type="binding site" evidence="1">
    <location>
        <begin position="116"/>
        <end position="120"/>
    </location>
    <ligand>
        <name>substrate</name>
    </ligand>
</feature>
<feature type="binding site" evidence="1">
    <location>
        <position position="156"/>
    </location>
    <ligand>
        <name>FMN</name>
        <dbReference type="ChEBI" id="CHEBI:58210"/>
    </ligand>
</feature>
<feature type="binding site" evidence="1">
    <location>
        <position position="189"/>
    </location>
    <ligand>
        <name>FMN</name>
        <dbReference type="ChEBI" id="CHEBI:58210"/>
    </ligand>
</feature>
<feature type="binding site" evidence="1">
    <location>
        <position position="189"/>
    </location>
    <ligand>
        <name>substrate</name>
    </ligand>
</feature>
<feature type="binding site" evidence="1">
    <location>
        <position position="194"/>
    </location>
    <ligand>
        <name>substrate</name>
    </ligand>
</feature>
<feature type="binding site" evidence="1">
    <location>
        <position position="231"/>
    </location>
    <ligand>
        <name>FMN</name>
        <dbReference type="ChEBI" id="CHEBI:58210"/>
    </ligand>
</feature>
<feature type="binding site" evidence="1">
    <location>
        <position position="259"/>
    </location>
    <ligand>
        <name>FMN</name>
        <dbReference type="ChEBI" id="CHEBI:58210"/>
    </ligand>
</feature>
<feature type="binding site" evidence="1">
    <location>
        <begin position="260"/>
        <end position="261"/>
    </location>
    <ligand>
        <name>substrate</name>
    </ligand>
</feature>
<feature type="binding site" evidence="1">
    <location>
        <position position="287"/>
    </location>
    <ligand>
        <name>FMN</name>
        <dbReference type="ChEBI" id="CHEBI:58210"/>
    </ligand>
</feature>
<feature type="binding site" evidence="1">
    <location>
        <position position="316"/>
    </location>
    <ligand>
        <name>FMN</name>
        <dbReference type="ChEBI" id="CHEBI:58210"/>
    </ligand>
</feature>
<feature type="binding site" evidence="1">
    <location>
        <begin position="337"/>
        <end position="338"/>
    </location>
    <ligand>
        <name>FMN</name>
        <dbReference type="ChEBI" id="CHEBI:58210"/>
    </ligand>
</feature>
<name>PYRD_KOCRD</name>
<keyword id="KW-1003">Cell membrane</keyword>
<keyword id="KW-0285">Flavoprotein</keyword>
<keyword id="KW-0288">FMN</keyword>
<keyword id="KW-0472">Membrane</keyword>
<keyword id="KW-0560">Oxidoreductase</keyword>
<keyword id="KW-0665">Pyrimidine biosynthesis</keyword>
<keyword id="KW-1185">Reference proteome</keyword>
<reference key="1">
    <citation type="journal article" date="2008" name="J. Bacteriol.">
        <title>Complete genome sequence of the soil actinomycete Kocuria rhizophila.</title>
        <authorList>
            <person name="Takarada H."/>
            <person name="Sekine M."/>
            <person name="Kosugi H."/>
            <person name="Matsuo Y."/>
            <person name="Fujisawa T."/>
            <person name="Omata S."/>
            <person name="Kishi E."/>
            <person name="Shimizu A."/>
            <person name="Tsukatani N."/>
            <person name="Tanikawa S."/>
            <person name="Fujita N."/>
            <person name="Harayama S."/>
        </authorList>
    </citation>
    <scope>NUCLEOTIDE SEQUENCE [LARGE SCALE GENOMIC DNA]</scope>
    <source>
        <strain>ATCC 9341 / DSM 348 / NBRC 103217 / DC2201</strain>
    </source>
</reference>
<protein>
    <recommendedName>
        <fullName evidence="1">Dihydroorotate dehydrogenase (quinone)</fullName>
        <ecNumber evidence="1">1.3.5.2</ecNumber>
    </recommendedName>
    <alternativeName>
        <fullName evidence="1">DHOdehase</fullName>
        <shortName evidence="1">DHOD</shortName>
        <shortName evidence="1">DHODase</shortName>
    </alternativeName>
    <alternativeName>
        <fullName evidence="1">Dihydroorotate oxidase</fullName>
    </alternativeName>
</protein>
<evidence type="ECO:0000255" key="1">
    <source>
        <dbReference type="HAMAP-Rule" id="MF_00225"/>
    </source>
</evidence>
<proteinExistence type="inferred from homology"/>
<comment type="function">
    <text evidence="1">Catalyzes the conversion of dihydroorotate to orotate with quinone as electron acceptor.</text>
</comment>
<comment type="catalytic activity">
    <reaction evidence="1">
        <text>(S)-dihydroorotate + a quinone = orotate + a quinol</text>
        <dbReference type="Rhea" id="RHEA:30187"/>
        <dbReference type="ChEBI" id="CHEBI:24646"/>
        <dbReference type="ChEBI" id="CHEBI:30839"/>
        <dbReference type="ChEBI" id="CHEBI:30864"/>
        <dbReference type="ChEBI" id="CHEBI:132124"/>
        <dbReference type="EC" id="1.3.5.2"/>
    </reaction>
</comment>
<comment type="cofactor">
    <cofactor evidence="1">
        <name>FMN</name>
        <dbReference type="ChEBI" id="CHEBI:58210"/>
    </cofactor>
    <text evidence="1">Binds 1 FMN per subunit.</text>
</comment>
<comment type="pathway">
    <text evidence="1">Pyrimidine metabolism; UMP biosynthesis via de novo pathway; orotate from (S)-dihydroorotate (quinone route): step 1/1.</text>
</comment>
<comment type="subunit">
    <text evidence="1">Monomer.</text>
</comment>
<comment type="subcellular location">
    <subcellularLocation>
        <location evidence="1">Cell membrane</location>
        <topology evidence="1">Peripheral membrane protein</topology>
    </subcellularLocation>
</comment>
<comment type="similarity">
    <text evidence="1">Belongs to the dihydroorotate dehydrogenase family. Type 2 subfamily.</text>
</comment>